<protein>
    <recommendedName>
        <fullName evidence="1">Ribosomal RNA small subunit methyltransferase J</fullName>
        <ecNumber evidence="1">2.1.1.242</ecNumber>
    </recommendedName>
    <alternativeName>
        <fullName evidence="1">16S rRNA m2G1516 methyltransferase</fullName>
    </alternativeName>
    <alternativeName>
        <fullName evidence="1">rRNA (guanine-N(2)-)-methyltransferase</fullName>
    </alternativeName>
</protein>
<keyword id="KW-0963">Cytoplasm</keyword>
<keyword id="KW-0489">Methyltransferase</keyword>
<keyword id="KW-0698">rRNA processing</keyword>
<keyword id="KW-0949">S-adenosyl-L-methionine</keyword>
<keyword id="KW-0808">Transferase</keyword>
<feature type="chain" id="PRO_1000198510" description="Ribosomal RNA small subunit methyltransferase J">
    <location>
        <begin position="1"/>
        <end position="252"/>
    </location>
</feature>
<feature type="binding site" evidence="1">
    <location>
        <begin position="101"/>
        <end position="102"/>
    </location>
    <ligand>
        <name>S-adenosyl-L-methionine</name>
        <dbReference type="ChEBI" id="CHEBI:59789"/>
    </ligand>
</feature>
<feature type="binding site" evidence="1">
    <location>
        <begin position="117"/>
        <end position="118"/>
    </location>
    <ligand>
        <name>S-adenosyl-L-methionine</name>
        <dbReference type="ChEBI" id="CHEBI:59789"/>
    </ligand>
</feature>
<feature type="binding site" evidence="1">
    <location>
        <begin position="153"/>
        <end position="154"/>
    </location>
    <ligand>
        <name>S-adenosyl-L-methionine</name>
        <dbReference type="ChEBI" id="CHEBI:59789"/>
    </ligand>
</feature>
<feature type="binding site" evidence="1">
    <location>
        <position position="171"/>
    </location>
    <ligand>
        <name>S-adenosyl-L-methionine</name>
        <dbReference type="ChEBI" id="CHEBI:59789"/>
    </ligand>
</feature>
<accession>B4T8C7</accession>
<dbReference type="EC" id="2.1.1.242" evidence="1"/>
<dbReference type="EMBL" id="CP001120">
    <property type="protein sequence ID" value="ACF69998.1"/>
    <property type="molecule type" value="Genomic_DNA"/>
</dbReference>
<dbReference type="RefSeq" id="WP_001165129.1">
    <property type="nucleotide sequence ID" value="NC_011083.1"/>
</dbReference>
<dbReference type="SMR" id="B4T8C7"/>
<dbReference type="KEGG" id="seh:SeHA_C3906"/>
<dbReference type="HOGENOM" id="CLU_076324_0_0_6"/>
<dbReference type="Proteomes" id="UP000001866">
    <property type="component" value="Chromosome"/>
</dbReference>
<dbReference type="GO" id="GO:0005737">
    <property type="term" value="C:cytoplasm"/>
    <property type="evidence" value="ECO:0007669"/>
    <property type="project" value="UniProtKB-SubCell"/>
</dbReference>
<dbReference type="GO" id="GO:0008990">
    <property type="term" value="F:rRNA (guanine-N2-)-methyltransferase activity"/>
    <property type="evidence" value="ECO:0007669"/>
    <property type="project" value="UniProtKB-UniRule"/>
</dbReference>
<dbReference type="CDD" id="cd02440">
    <property type="entry name" value="AdoMet_MTases"/>
    <property type="match status" value="1"/>
</dbReference>
<dbReference type="FunFam" id="3.40.1630.10:FF:000001">
    <property type="entry name" value="Ribosomal RNA small subunit methyltransferase J"/>
    <property type="match status" value="1"/>
</dbReference>
<dbReference type="FunFam" id="3.40.50.150:FF:000072">
    <property type="entry name" value="Ribosomal RNA small subunit methyltransferase J"/>
    <property type="match status" value="1"/>
</dbReference>
<dbReference type="Gene3D" id="3.40.50.150">
    <property type="entry name" value="Vaccinia Virus protein VP39"/>
    <property type="match status" value="1"/>
</dbReference>
<dbReference type="Gene3D" id="3.40.1630.10">
    <property type="entry name" value="YhiQ-like domain"/>
    <property type="match status" value="1"/>
</dbReference>
<dbReference type="HAMAP" id="MF_01523">
    <property type="entry name" value="16SrRNA_methyltr_J"/>
    <property type="match status" value="1"/>
</dbReference>
<dbReference type="InterPro" id="IPR007536">
    <property type="entry name" value="16SrRNA_methylTrfase_J"/>
</dbReference>
<dbReference type="InterPro" id="IPR029063">
    <property type="entry name" value="SAM-dependent_MTases_sf"/>
</dbReference>
<dbReference type="NCBIfam" id="NF008012">
    <property type="entry name" value="PRK10742.1"/>
    <property type="match status" value="1"/>
</dbReference>
<dbReference type="PANTHER" id="PTHR36112">
    <property type="entry name" value="RIBOSOMAL RNA SMALL SUBUNIT METHYLTRANSFERASE J"/>
    <property type="match status" value="1"/>
</dbReference>
<dbReference type="PANTHER" id="PTHR36112:SF1">
    <property type="entry name" value="RIBOSOMAL RNA SMALL SUBUNIT METHYLTRANSFERASE J"/>
    <property type="match status" value="1"/>
</dbReference>
<dbReference type="Pfam" id="PF04445">
    <property type="entry name" value="SAM_MT"/>
    <property type="match status" value="1"/>
</dbReference>
<dbReference type="SUPFAM" id="SSF53335">
    <property type="entry name" value="S-adenosyl-L-methionine-dependent methyltransferases"/>
    <property type="match status" value="1"/>
</dbReference>
<comment type="function">
    <text evidence="1">Specifically methylates the guanosine in position 1516 of 16S rRNA.</text>
</comment>
<comment type="catalytic activity">
    <reaction evidence="1">
        <text>guanosine(1516) in 16S rRNA + S-adenosyl-L-methionine = N(2)-methylguanosine(1516) in 16S rRNA + S-adenosyl-L-homocysteine + H(+)</text>
        <dbReference type="Rhea" id="RHEA:43220"/>
        <dbReference type="Rhea" id="RHEA-COMP:10412"/>
        <dbReference type="Rhea" id="RHEA-COMP:10413"/>
        <dbReference type="ChEBI" id="CHEBI:15378"/>
        <dbReference type="ChEBI" id="CHEBI:57856"/>
        <dbReference type="ChEBI" id="CHEBI:59789"/>
        <dbReference type="ChEBI" id="CHEBI:74269"/>
        <dbReference type="ChEBI" id="CHEBI:74481"/>
        <dbReference type="EC" id="2.1.1.242"/>
    </reaction>
</comment>
<comment type="subcellular location">
    <subcellularLocation>
        <location evidence="1">Cytoplasm</location>
    </subcellularLocation>
</comment>
<comment type="similarity">
    <text evidence="1">Belongs to the methyltransferase superfamily. RsmJ family.</text>
</comment>
<evidence type="ECO:0000255" key="1">
    <source>
        <dbReference type="HAMAP-Rule" id="MF_01523"/>
    </source>
</evidence>
<sequence length="252" mass="27310">MQICLMDETGATDGALSVLAARWGLEHDEDNPMALVLTPQHLELRKRDEPKLGGIFVDFVGGAMAHRRKFGGGRGEAVAKAVGIKGDYLPDVVDATAGLGRDAFVLASVGCRVRMLERNPVVAALLDDGLTRGYADADIGGWLQERLQLIHVSSLTALTDITPRPQVVYLDPMFPHRQKSALVKKEMRVFQSLVGPDLDADGLLEPARQLATKRVVVKRPDYAPPLADVATPNAIVTKGHRFDIYAGTPLTE</sequence>
<reference key="1">
    <citation type="journal article" date="2011" name="J. Bacteriol.">
        <title>Comparative genomics of 28 Salmonella enterica isolates: evidence for CRISPR-mediated adaptive sublineage evolution.</title>
        <authorList>
            <person name="Fricke W.F."/>
            <person name="Mammel M.K."/>
            <person name="McDermott P.F."/>
            <person name="Tartera C."/>
            <person name="White D.G."/>
            <person name="Leclerc J.E."/>
            <person name="Ravel J."/>
            <person name="Cebula T.A."/>
        </authorList>
    </citation>
    <scope>NUCLEOTIDE SEQUENCE [LARGE SCALE GENOMIC DNA]</scope>
    <source>
        <strain>SL476</strain>
    </source>
</reference>
<organism>
    <name type="scientific">Salmonella heidelberg (strain SL476)</name>
    <dbReference type="NCBI Taxonomy" id="454169"/>
    <lineage>
        <taxon>Bacteria</taxon>
        <taxon>Pseudomonadati</taxon>
        <taxon>Pseudomonadota</taxon>
        <taxon>Gammaproteobacteria</taxon>
        <taxon>Enterobacterales</taxon>
        <taxon>Enterobacteriaceae</taxon>
        <taxon>Salmonella</taxon>
    </lineage>
</organism>
<proteinExistence type="inferred from homology"/>
<name>RSMJ_SALHS</name>
<gene>
    <name evidence="1" type="primary">rsmJ</name>
    <name type="synonym">yhiQ</name>
    <name type="ordered locus">SeHA_C3906</name>
</gene>